<gene>
    <name evidence="1" type="primary">rpsK</name>
    <name type="ordered locus">Rmet_3293</name>
</gene>
<evidence type="ECO:0000255" key="1">
    <source>
        <dbReference type="HAMAP-Rule" id="MF_01310"/>
    </source>
</evidence>
<evidence type="ECO:0000305" key="2"/>
<keyword id="KW-1185">Reference proteome</keyword>
<keyword id="KW-0687">Ribonucleoprotein</keyword>
<keyword id="KW-0689">Ribosomal protein</keyword>
<keyword id="KW-0694">RNA-binding</keyword>
<keyword id="KW-0699">rRNA-binding</keyword>
<organism>
    <name type="scientific">Cupriavidus metallidurans (strain ATCC 43123 / DSM 2839 / NBRC 102507 / CH34)</name>
    <name type="common">Ralstonia metallidurans</name>
    <dbReference type="NCBI Taxonomy" id="266264"/>
    <lineage>
        <taxon>Bacteria</taxon>
        <taxon>Pseudomonadati</taxon>
        <taxon>Pseudomonadota</taxon>
        <taxon>Betaproteobacteria</taxon>
        <taxon>Burkholderiales</taxon>
        <taxon>Burkholderiaceae</taxon>
        <taxon>Cupriavidus</taxon>
    </lineage>
</organism>
<feature type="chain" id="PRO_0000294832" description="Small ribosomal subunit protein uS11">
    <location>
        <begin position="1"/>
        <end position="133"/>
    </location>
</feature>
<protein>
    <recommendedName>
        <fullName evidence="1">Small ribosomal subunit protein uS11</fullName>
    </recommendedName>
    <alternativeName>
        <fullName evidence="2">30S ribosomal protein S11</fullName>
    </alternativeName>
</protein>
<dbReference type="EMBL" id="CP000352">
    <property type="protein sequence ID" value="ABF10165.1"/>
    <property type="molecule type" value="Genomic_DNA"/>
</dbReference>
<dbReference type="RefSeq" id="WP_008642963.1">
    <property type="nucleotide sequence ID" value="NC_007973.1"/>
</dbReference>
<dbReference type="SMR" id="Q1LI61"/>
<dbReference type="STRING" id="266264.Rmet_3293"/>
<dbReference type="GeneID" id="98344090"/>
<dbReference type="KEGG" id="rme:Rmet_3293"/>
<dbReference type="eggNOG" id="COG0100">
    <property type="taxonomic scope" value="Bacteria"/>
</dbReference>
<dbReference type="HOGENOM" id="CLU_072439_5_0_4"/>
<dbReference type="Proteomes" id="UP000002429">
    <property type="component" value="Chromosome"/>
</dbReference>
<dbReference type="GO" id="GO:1990904">
    <property type="term" value="C:ribonucleoprotein complex"/>
    <property type="evidence" value="ECO:0007669"/>
    <property type="project" value="UniProtKB-KW"/>
</dbReference>
<dbReference type="GO" id="GO:0005840">
    <property type="term" value="C:ribosome"/>
    <property type="evidence" value="ECO:0007669"/>
    <property type="project" value="UniProtKB-KW"/>
</dbReference>
<dbReference type="GO" id="GO:0019843">
    <property type="term" value="F:rRNA binding"/>
    <property type="evidence" value="ECO:0007669"/>
    <property type="project" value="UniProtKB-UniRule"/>
</dbReference>
<dbReference type="GO" id="GO:0003735">
    <property type="term" value="F:structural constituent of ribosome"/>
    <property type="evidence" value="ECO:0007669"/>
    <property type="project" value="InterPro"/>
</dbReference>
<dbReference type="GO" id="GO:0006412">
    <property type="term" value="P:translation"/>
    <property type="evidence" value="ECO:0007669"/>
    <property type="project" value="UniProtKB-UniRule"/>
</dbReference>
<dbReference type="FunFam" id="3.30.420.80:FF:000001">
    <property type="entry name" value="30S ribosomal protein S11"/>
    <property type="match status" value="1"/>
</dbReference>
<dbReference type="Gene3D" id="3.30.420.80">
    <property type="entry name" value="Ribosomal protein S11"/>
    <property type="match status" value="1"/>
</dbReference>
<dbReference type="HAMAP" id="MF_01310">
    <property type="entry name" value="Ribosomal_uS11"/>
    <property type="match status" value="1"/>
</dbReference>
<dbReference type="InterPro" id="IPR001971">
    <property type="entry name" value="Ribosomal_uS11"/>
</dbReference>
<dbReference type="InterPro" id="IPR019981">
    <property type="entry name" value="Ribosomal_uS11_bac-type"/>
</dbReference>
<dbReference type="InterPro" id="IPR018102">
    <property type="entry name" value="Ribosomal_uS11_CS"/>
</dbReference>
<dbReference type="InterPro" id="IPR036967">
    <property type="entry name" value="Ribosomal_uS11_sf"/>
</dbReference>
<dbReference type="NCBIfam" id="NF003698">
    <property type="entry name" value="PRK05309.1"/>
    <property type="match status" value="1"/>
</dbReference>
<dbReference type="NCBIfam" id="TIGR03632">
    <property type="entry name" value="uS11_bact"/>
    <property type="match status" value="1"/>
</dbReference>
<dbReference type="PANTHER" id="PTHR11759">
    <property type="entry name" value="40S RIBOSOMAL PROTEIN S14/30S RIBOSOMAL PROTEIN S11"/>
    <property type="match status" value="1"/>
</dbReference>
<dbReference type="Pfam" id="PF00411">
    <property type="entry name" value="Ribosomal_S11"/>
    <property type="match status" value="1"/>
</dbReference>
<dbReference type="PIRSF" id="PIRSF002131">
    <property type="entry name" value="Ribosomal_S11"/>
    <property type="match status" value="1"/>
</dbReference>
<dbReference type="SUPFAM" id="SSF53137">
    <property type="entry name" value="Translational machinery components"/>
    <property type="match status" value="1"/>
</dbReference>
<dbReference type="PROSITE" id="PS00054">
    <property type="entry name" value="RIBOSOMAL_S11"/>
    <property type="match status" value="1"/>
</dbReference>
<sequence length="133" mass="14077">MAKGPNNAAQRARKKVKKNVADGIAHVHASFNNTIITITDRQGNALSWATAGGQGFKGSRKSTPFAAQVAAENAGRVAQDQGIKNLEVRIKGPGPGRESAVRALNALGIKIAVIEDVTPVPHNGCRPPKRRRI</sequence>
<proteinExistence type="inferred from homology"/>
<name>RS11_CUPMC</name>
<reference key="1">
    <citation type="journal article" date="2010" name="PLoS ONE">
        <title>The complete genome sequence of Cupriavidus metallidurans strain CH34, a master survivalist in harsh and anthropogenic environments.</title>
        <authorList>
            <person name="Janssen P.J."/>
            <person name="Van Houdt R."/>
            <person name="Moors H."/>
            <person name="Monsieurs P."/>
            <person name="Morin N."/>
            <person name="Michaux A."/>
            <person name="Benotmane M.A."/>
            <person name="Leys N."/>
            <person name="Vallaeys T."/>
            <person name="Lapidus A."/>
            <person name="Monchy S."/>
            <person name="Medigue C."/>
            <person name="Taghavi S."/>
            <person name="McCorkle S."/>
            <person name="Dunn J."/>
            <person name="van der Lelie D."/>
            <person name="Mergeay M."/>
        </authorList>
    </citation>
    <scope>NUCLEOTIDE SEQUENCE [LARGE SCALE GENOMIC DNA]</scope>
    <source>
        <strain>ATCC 43123 / DSM 2839 / NBRC 102507 / CH34</strain>
    </source>
</reference>
<comment type="function">
    <text evidence="1">Located on the platform of the 30S subunit, it bridges several disparate RNA helices of the 16S rRNA. Forms part of the Shine-Dalgarno cleft in the 70S ribosome.</text>
</comment>
<comment type="subunit">
    <text evidence="1">Part of the 30S ribosomal subunit. Interacts with proteins S7 and S18. Binds to IF-3.</text>
</comment>
<comment type="similarity">
    <text evidence="1">Belongs to the universal ribosomal protein uS11 family.</text>
</comment>
<accession>Q1LI61</accession>